<protein>
    <recommendedName>
        <fullName evidence="1">UvrABC system protein B</fullName>
        <shortName evidence="1">Protein UvrB</shortName>
    </recommendedName>
    <alternativeName>
        <fullName evidence="1">Excinuclease ABC subunit B</fullName>
    </alternativeName>
</protein>
<organism>
    <name type="scientific">Erwinia tasmaniensis (strain DSM 17950 / CFBP 7177 / CIP 109463 / NCPPB 4357 / Et1/99)</name>
    <dbReference type="NCBI Taxonomy" id="465817"/>
    <lineage>
        <taxon>Bacteria</taxon>
        <taxon>Pseudomonadati</taxon>
        <taxon>Pseudomonadota</taxon>
        <taxon>Gammaproteobacteria</taxon>
        <taxon>Enterobacterales</taxon>
        <taxon>Erwiniaceae</taxon>
        <taxon>Erwinia</taxon>
    </lineage>
</organism>
<feature type="chain" id="PRO_1000099551" description="UvrABC system protein B">
    <location>
        <begin position="1"/>
        <end position="674"/>
    </location>
</feature>
<feature type="domain" description="Helicase ATP-binding" evidence="1">
    <location>
        <begin position="26"/>
        <end position="183"/>
    </location>
</feature>
<feature type="domain" description="Helicase C-terminal" evidence="1">
    <location>
        <begin position="431"/>
        <end position="597"/>
    </location>
</feature>
<feature type="domain" description="UVR" evidence="1">
    <location>
        <begin position="634"/>
        <end position="669"/>
    </location>
</feature>
<feature type="short sequence motif" description="Beta-hairpin">
    <location>
        <begin position="92"/>
        <end position="115"/>
    </location>
</feature>
<feature type="binding site" evidence="1">
    <location>
        <begin position="39"/>
        <end position="46"/>
    </location>
    <ligand>
        <name>ATP</name>
        <dbReference type="ChEBI" id="CHEBI:30616"/>
    </ligand>
</feature>
<reference key="1">
    <citation type="journal article" date="2008" name="Environ. Microbiol.">
        <title>The genome of Erwinia tasmaniensis strain Et1/99, a non-pathogenic bacterium in the genus Erwinia.</title>
        <authorList>
            <person name="Kube M."/>
            <person name="Migdoll A.M."/>
            <person name="Mueller I."/>
            <person name="Kuhl H."/>
            <person name="Beck A."/>
            <person name="Reinhardt R."/>
            <person name="Geider K."/>
        </authorList>
    </citation>
    <scope>NUCLEOTIDE SEQUENCE [LARGE SCALE GENOMIC DNA]</scope>
    <source>
        <strain>DSM 17950 / CFBP 7177 / CIP 109463 / NCPPB 4357 / Et1/99</strain>
    </source>
</reference>
<gene>
    <name evidence="1" type="primary">uvrB</name>
    <name type="ordered locus">ETA_22610</name>
</gene>
<dbReference type="EMBL" id="CU468135">
    <property type="protein sequence ID" value="CAO97307.1"/>
    <property type="molecule type" value="Genomic_DNA"/>
</dbReference>
<dbReference type="RefSeq" id="WP_012441976.1">
    <property type="nucleotide sequence ID" value="NC_010694.1"/>
</dbReference>
<dbReference type="SMR" id="B2VBW9"/>
<dbReference type="STRING" id="465817.ETA_22610"/>
<dbReference type="KEGG" id="eta:ETA_22610"/>
<dbReference type="eggNOG" id="COG0556">
    <property type="taxonomic scope" value="Bacteria"/>
</dbReference>
<dbReference type="HOGENOM" id="CLU_009621_2_1_6"/>
<dbReference type="OrthoDB" id="9806651at2"/>
<dbReference type="Proteomes" id="UP000001726">
    <property type="component" value="Chromosome"/>
</dbReference>
<dbReference type="GO" id="GO:0005737">
    <property type="term" value="C:cytoplasm"/>
    <property type="evidence" value="ECO:0007669"/>
    <property type="project" value="UniProtKB-SubCell"/>
</dbReference>
<dbReference type="GO" id="GO:0009380">
    <property type="term" value="C:excinuclease repair complex"/>
    <property type="evidence" value="ECO:0007669"/>
    <property type="project" value="InterPro"/>
</dbReference>
<dbReference type="GO" id="GO:0005524">
    <property type="term" value="F:ATP binding"/>
    <property type="evidence" value="ECO:0007669"/>
    <property type="project" value="UniProtKB-UniRule"/>
</dbReference>
<dbReference type="GO" id="GO:0016887">
    <property type="term" value="F:ATP hydrolysis activity"/>
    <property type="evidence" value="ECO:0007669"/>
    <property type="project" value="InterPro"/>
</dbReference>
<dbReference type="GO" id="GO:0003677">
    <property type="term" value="F:DNA binding"/>
    <property type="evidence" value="ECO:0007669"/>
    <property type="project" value="UniProtKB-UniRule"/>
</dbReference>
<dbReference type="GO" id="GO:0009381">
    <property type="term" value="F:excinuclease ABC activity"/>
    <property type="evidence" value="ECO:0007669"/>
    <property type="project" value="UniProtKB-UniRule"/>
</dbReference>
<dbReference type="GO" id="GO:0004386">
    <property type="term" value="F:helicase activity"/>
    <property type="evidence" value="ECO:0007669"/>
    <property type="project" value="UniProtKB-KW"/>
</dbReference>
<dbReference type="GO" id="GO:0006289">
    <property type="term" value="P:nucleotide-excision repair"/>
    <property type="evidence" value="ECO:0007669"/>
    <property type="project" value="UniProtKB-UniRule"/>
</dbReference>
<dbReference type="GO" id="GO:0009432">
    <property type="term" value="P:SOS response"/>
    <property type="evidence" value="ECO:0007669"/>
    <property type="project" value="UniProtKB-UniRule"/>
</dbReference>
<dbReference type="CDD" id="cd17916">
    <property type="entry name" value="DEXHc_UvrB"/>
    <property type="match status" value="1"/>
</dbReference>
<dbReference type="CDD" id="cd18790">
    <property type="entry name" value="SF2_C_UvrB"/>
    <property type="match status" value="1"/>
</dbReference>
<dbReference type="FunFam" id="3.40.50.300:FF:000257">
    <property type="entry name" value="UvrABC system protein B"/>
    <property type="match status" value="1"/>
</dbReference>
<dbReference type="FunFam" id="3.40.50.300:FF:000401">
    <property type="entry name" value="UvrABC system protein B"/>
    <property type="match status" value="1"/>
</dbReference>
<dbReference type="FunFam" id="3.40.50.300:FF:000477">
    <property type="entry name" value="UvrABC system protein B"/>
    <property type="match status" value="1"/>
</dbReference>
<dbReference type="Gene3D" id="3.40.50.300">
    <property type="entry name" value="P-loop containing nucleotide triphosphate hydrolases"/>
    <property type="match status" value="3"/>
</dbReference>
<dbReference type="Gene3D" id="4.10.860.10">
    <property type="entry name" value="UVR domain"/>
    <property type="match status" value="1"/>
</dbReference>
<dbReference type="HAMAP" id="MF_00204">
    <property type="entry name" value="UvrB"/>
    <property type="match status" value="1"/>
</dbReference>
<dbReference type="InterPro" id="IPR006935">
    <property type="entry name" value="Helicase/UvrB_N"/>
</dbReference>
<dbReference type="InterPro" id="IPR014001">
    <property type="entry name" value="Helicase_ATP-bd"/>
</dbReference>
<dbReference type="InterPro" id="IPR001650">
    <property type="entry name" value="Helicase_C-like"/>
</dbReference>
<dbReference type="InterPro" id="IPR027417">
    <property type="entry name" value="P-loop_NTPase"/>
</dbReference>
<dbReference type="InterPro" id="IPR001943">
    <property type="entry name" value="UVR_dom"/>
</dbReference>
<dbReference type="InterPro" id="IPR036876">
    <property type="entry name" value="UVR_dom_sf"/>
</dbReference>
<dbReference type="InterPro" id="IPR004807">
    <property type="entry name" value="UvrB"/>
</dbReference>
<dbReference type="InterPro" id="IPR041471">
    <property type="entry name" value="UvrB_inter"/>
</dbReference>
<dbReference type="InterPro" id="IPR024759">
    <property type="entry name" value="UvrB_YAD/RRR_dom"/>
</dbReference>
<dbReference type="NCBIfam" id="NF003673">
    <property type="entry name" value="PRK05298.1"/>
    <property type="match status" value="1"/>
</dbReference>
<dbReference type="NCBIfam" id="TIGR00631">
    <property type="entry name" value="uvrb"/>
    <property type="match status" value="1"/>
</dbReference>
<dbReference type="PANTHER" id="PTHR24029">
    <property type="entry name" value="UVRABC SYSTEM PROTEIN B"/>
    <property type="match status" value="1"/>
</dbReference>
<dbReference type="PANTHER" id="PTHR24029:SF0">
    <property type="entry name" value="UVRABC SYSTEM PROTEIN B"/>
    <property type="match status" value="1"/>
</dbReference>
<dbReference type="Pfam" id="PF00271">
    <property type="entry name" value="Helicase_C"/>
    <property type="match status" value="1"/>
</dbReference>
<dbReference type="Pfam" id="PF04851">
    <property type="entry name" value="ResIII"/>
    <property type="match status" value="1"/>
</dbReference>
<dbReference type="Pfam" id="PF02151">
    <property type="entry name" value="UVR"/>
    <property type="match status" value="1"/>
</dbReference>
<dbReference type="Pfam" id="PF12344">
    <property type="entry name" value="UvrB"/>
    <property type="match status" value="1"/>
</dbReference>
<dbReference type="Pfam" id="PF17757">
    <property type="entry name" value="UvrB_inter"/>
    <property type="match status" value="1"/>
</dbReference>
<dbReference type="SMART" id="SM00487">
    <property type="entry name" value="DEXDc"/>
    <property type="match status" value="1"/>
</dbReference>
<dbReference type="SMART" id="SM00490">
    <property type="entry name" value="HELICc"/>
    <property type="match status" value="1"/>
</dbReference>
<dbReference type="SUPFAM" id="SSF46600">
    <property type="entry name" value="C-terminal UvrC-binding domain of UvrB"/>
    <property type="match status" value="1"/>
</dbReference>
<dbReference type="SUPFAM" id="SSF52540">
    <property type="entry name" value="P-loop containing nucleoside triphosphate hydrolases"/>
    <property type="match status" value="2"/>
</dbReference>
<dbReference type="PROSITE" id="PS51192">
    <property type="entry name" value="HELICASE_ATP_BIND_1"/>
    <property type="match status" value="1"/>
</dbReference>
<dbReference type="PROSITE" id="PS51194">
    <property type="entry name" value="HELICASE_CTER"/>
    <property type="match status" value="1"/>
</dbReference>
<dbReference type="PROSITE" id="PS50151">
    <property type="entry name" value="UVR"/>
    <property type="match status" value="1"/>
</dbReference>
<sequence>MSKVFKLNSEFKPAGDQPEAIRRLEEGLEDGLAHQTLLGVTGSGKTFTVANVIADLNRPTMVLAPNKTLAAQLYGEMKEFFPDNAVEYFVSYYDYYQPEAYVPSSDTFIEKDASVNEHIEQMRLSATKALLERRDVVVVASVSAIYGLGDPDLYLKMMLHLSRGMVIDQRAILRRLAELQYTRNDQAFQRGTFRVRGEVIDIFPAESDDYALRVELFDEEVERLSIFDPLTGQIESVIPRYTIYPKTHYVTPRERILQAMEEIKDELVERKKVLLDNNKLLEEQRLSQRTQFDLEMMNELGYCSGIENYSRYLSGRGPGEAPPTLFDYLPADGLLVIDESHVTIPQIGGMYRGDRARKETLVEYGFRLPSALDNRPMKFEEFEGLAPQTIYVSATPGNYELEKSGGEVIDQVVRPTGLLDPIVEVRPVGTQVDDLLSEIRQRVAINERVLVTVLTKRMAEDLTEYLTEHGERVRYLHSDIDTVERVEIIRDLRLGKFDVLVGINLLREGLDMPEVSLVAILDADKEGFLRSERSLIQTIGRAARNLNGKAILYGDKITPSMARAIGETERRREKQQLHNEEHGIVPQGLNKKISDILELGQGLAKNKAKPRNMKGRSIVEDDPAHVDLTPQGLQKRIHQLEAQMQQHAQNLEFEEAAQVRDQLHQVRELFIAAS</sequence>
<proteinExistence type="inferred from homology"/>
<evidence type="ECO:0000255" key="1">
    <source>
        <dbReference type="HAMAP-Rule" id="MF_00204"/>
    </source>
</evidence>
<name>UVRB_ERWT9</name>
<comment type="function">
    <text evidence="1">The UvrABC repair system catalyzes the recognition and processing of DNA lesions. A damage recognition complex composed of 2 UvrA and 2 UvrB subunits scans DNA for abnormalities. Upon binding of the UvrA(2)B(2) complex to a putative damaged site, the DNA wraps around one UvrB monomer. DNA wrap is dependent on ATP binding by UvrB and probably causes local melting of the DNA helix, facilitating insertion of UvrB beta-hairpin between the DNA strands. Then UvrB probes one DNA strand for the presence of a lesion. If a lesion is found the UvrA subunits dissociate and the UvrB-DNA preincision complex is formed. This complex is subsequently bound by UvrC and the second UvrB is released. If no lesion is found, the DNA wraps around the other UvrB subunit that will check the other stand for damage.</text>
</comment>
<comment type="subunit">
    <text evidence="1">Forms a heterotetramer with UvrA during the search for lesions. Interacts with UvrC in an incision complex.</text>
</comment>
<comment type="subcellular location">
    <subcellularLocation>
        <location evidence="1">Cytoplasm</location>
    </subcellularLocation>
</comment>
<comment type="domain">
    <text evidence="1">The beta-hairpin motif is involved in DNA binding.</text>
</comment>
<comment type="similarity">
    <text evidence="1">Belongs to the UvrB family.</text>
</comment>
<accession>B2VBW9</accession>
<keyword id="KW-0067">ATP-binding</keyword>
<keyword id="KW-0963">Cytoplasm</keyword>
<keyword id="KW-0227">DNA damage</keyword>
<keyword id="KW-0228">DNA excision</keyword>
<keyword id="KW-0234">DNA repair</keyword>
<keyword id="KW-0267">Excision nuclease</keyword>
<keyword id="KW-0347">Helicase</keyword>
<keyword id="KW-0378">Hydrolase</keyword>
<keyword id="KW-0547">Nucleotide-binding</keyword>
<keyword id="KW-1185">Reference proteome</keyword>
<keyword id="KW-0742">SOS response</keyword>